<proteinExistence type="inferred from homology"/>
<reference key="1">
    <citation type="journal article" date="2002" name="Nature">
        <title>Sequence and analysis of chromosome 2 of Dictyostelium discoideum.</title>
        <authorList>
            <person name="Gloeckner G."/>
            <person name="Eichinger L."/>
            <person name="Szafranski K."/>
            <person name="Pachebat J.A."/>
            <person name="Bankier A.T."/>
            <person name="Dear P.H."/>
            <person name="Lehmann R."/>
            <person name="Baumgart C."/>
            <person name="Parra G."/>
            <person name="Abril J.F."/>
            <person name="Guigo R."/>
            <person name="Kumpf K."/>
            <person name="Tunggal B."/>
            <person name="Cox E.C."/>
            <person name="Quail M.A."/>
            <person name="Platzer M."/>
            <person name="Rosenthal A."/>
            <person name="Noegel A.A."/>
        </authorList>
    </citation>
    <scope>NUCLEOTIDE SEQUENCE [LARGE SCALE GENOMIC DNA]</scope>
    <source>
        <strain>AX4</strain>
    </source>
</reference>
<reference key="2">
    <citation type="journal article" date="2005" name="Nature">
        <title>The genome of the social amoeba Dictyostelium discoideum.</title>
        <authorList>
            <person name="Eichinger L."/>
            <person name="Pachebat J.A."/>
            <person name="Gloeckner G."/>
            <person name="Rajandream M.A."/>
            <person name="Sucgang R."/>
            <person name="Berriman M."/>
            <person name="Song J."/>
            <person name="Olsen R."/>
            <person name="Szafranski K."/>
            <person name="Xu Q."/>
            <person name="Tunggal B."/>
            <person name="Kummerfeld S."/>
            <person name="Madera M."/>
            <person name="Konfortov B.A."/>
            <person name="Rivero F."/>
            <person name="Bankier A.T."/>
            <person name="Lehmann R."/>
            <person name="Hamlin N."/>
            <person name="Davies R."/>
            <person name="Gaudet P."/>
            <person name="Fey P."/>
            <person name="Pilcher K."/>
            <person name="Chen G."/>
            <person name="Saunders D."/>
            <person name="Sodergren E.J."/>
            <person name="Davis P."/>
            <person name="Kerhornou A."/>
            <person name="Nie X."/>
            <person name="Hall N."/>
            <person name="Anjard C."/>
            <person name="Hemphill L."/>
            <person name="Bason N."/>
            <person name="Farbrother P."/>
            <person name="Desany B."/>
            <person name="Just E."/>
            <person name="Morio T."/>
            <person name="Rost R."/>
            <person name="Churcher C.M."/>
            <person name="Cooper J."/>
            <person name="Haydock S."/>
            <person name="van Driessche N."/>
            <person name="Cronin A."/>
            <person name="Goodhead I."/>
            <person name="Muzny D.M."/>
            <person name="Mourier T."/>
            <person name="Pain A."/>
            <person name="Lu M."/>
            <person name="Harper D."/>
            <person name="Lindsay R."/>
            <person name="Hauser H."/>
            <person name="James K.D."/>
            <person name="Quiles M."/>
            <person name="Madan Babu M."/>
            <person name="Saito T."/>
            <person name="Buchrieser C."/>
            <person name="Wardroper A."/>
            <person name="Felder M."/>
            <person name="Thangavelu M."/>
            <person name="Johnson D."/>
            <person name="Knights A."/>
            <person name="Loulseged H."/>
            <person name="Mungall K.L."/>
            <person name="Oliver K."/>
            <person name="Price C."/>
            <person name="Quail M.A."/>
            <person name="Urushihara H."/>
            <person name="Hernandez J."/>
            <person name="Rabbinowitsch E."/>
            <person name="Steffen D."/>
            <person name="Sanders M."/>
            <person name="Ma J."/>
            <person name="Kohara Y."/>
            <person name="Sharp S."/>
            <person name="Simmonds M.N."/>
            <person name="Spiegler S."/>
            <person name="Tivey A."/>
            <person name="Sugano S."/>
            <person name="White B."/>
            <person name="Walker D."/>
            <person name="Woodward J.R."/>
            <person name="Winckler T."/>
            <person name="Tanaka Y."/>
            <person name="Shaulsky G."/>
            <person name="Schleicher M."/>
            <person name="Weinstock G.M."/>
            <person name="Rosenthal A."/>
            <person name="Cox E.C."/>
            <person name="Chisholm R.L."/>
            <person name="Gibbs R.A."/>
            <person name="Loomis W.F."/>
            <person name="Platzer M."/>
            <person name="Kay R.R."/>
            <person name="Williams J.G."/>
            <person name="Dear P.H."/>
            <person name="Noegel A.A."/>
            <person name="Barrell B.G."/>
            <person name="Kuspa A."/>
        </authorList>
    </citation>
    <scope>NUCLEOTIDE SEQUENCE [LARGE SCALE GENOMIC DNA]</scope>
    <source>
        <strain>AX4</strain>
    </source>
</reference>
<organism>
    <name type="scientific">Dictyostelium discoideum</name>
    <name type="common">Social amoeba</name>
    <dbReference type="NCBI Taxonomy" id="44689"/>
    <lineage>
        <taxon>Eukaryota</taxon>
        <taxon>Amoebozoa</taxon>
        <taxon>Evosea</taxon>
        <taxon>Eumycetozoa</taxon>
        <taxon>Dictyostelia</taxon>
        <taxon>Dictyosteliales</taxon>
        <taxon>Dictyosteliaceae</taxon>
        <taxon>Dictyostelium</taxon>
    </lineage>
</organism>
<comment type="function">
    <text evidence="1 2">Subunit epsilon, of the mitochondrial membrane ATP synthase complex (F(1)F(0) ATP synthase or Complex V) that produces ATP from ADP in the presence of a proton gradient across the membrane which is generated by electron transport complexes of the respiratory chain. ATP synthase complex consist of a soluble F(1) head domain - the catalytic core - and a membrane F(1) domain - the membrane proton channel. These two domains are linked by a central stalk rotating inside the F(1) region and a stationary peripheral stalk. During catalysis, ATP synthesis in the catalytic domain of F(1) is coupled via a rotary mechanism of the central stalk subunits to proton translocation (By similarity). In vivo, can only synthesize ATP although its ATP hydrolase activity can be activated artificially in vitro (By similarity). May be essential for the assembly of F(1) and may play an important role in the incorporation of the hydrophobic subunit c into the F(1)-c oligomer rotor of the mitochondrial ATP synthase complex (By similarity).</text>
</comment>
<comment type="subunit">
    <text evidence="2">Component of the ATP synthase complex composed at least of ATP5F1A/subunit alpha, ATP5F1B/subunit beta, ATP5MC1/subunit c (homooctomer), MT-ATP6/subunit a, MT-ATP8/subunit 8, ATP5ME/subunit e, ATP5MF/subunit f, ATP5MG/subunit g, ATP5MK/subunit k, ATP5MJ/subunit j, ATP5F1C/subunit gamma, ATP5F1D/subunit delta, ATP5F1E/subunit epsilon, ATP5PF/subunit F6, ATP5PB/subunit b, ATP5PD/subunit d, ATP5PO/subunit OSCP. ATP synthase complex consists of a soluble F(1) head domain (subunits alpha(3) and beta(3)) - the catalytic core - and a membrane F(0) domain - the membrane proton channel (subunits c, a, 8, e, f, g, k and j). These two domains are linked by a central stalk (subunits gamma, delta, and epsilon) rotating inside the F1 region and a stationary peripheral stalk (subunits F6, b, d, and OSCP).</text>
</comment>
<comment type="subcellular location">
    <subcellularLocation>
        <location>Mitochondrion</location>
    </subcellularLocation>
    <subcellularLocation>
        <location evidence="3">Mitochondrion inner membrane</location>
    </subcellularLocation>
</comment>
<comment type="similarity">
    <text evidence="3">Belongs to the eukaryotic ATPase epsilon family.</text>
</comment>
<accession>Q75JK6</accession>
<accession>Q1ZXK8</accession>
<dbReference type="EMBL" id="AAFI02000014">
    <property type="protein sequence ID" value="EAS66911.1"/>
    <property type="molecule type" value="Genomic_DNA"/>
</dbReference>
<dbReference type="RefSeq" id="XP_001134595.1">
    <property type="nucleotide sequence ID" value="XM_001134595.1"/>
</dbReference>
<dbReference type="SMR" id="Q75JK6"/>
<dbReference type="FunCoup" id="Q75JK6">
    <property type="interactions" value="67"/>
</dbReference>
<dbReference type="STRING" id="44689.Q75JK6"/>
<dbReference type="PaxDb" id="44689-DDB0233319"/>
<dbReference type="EnsemblProtists" id="EAS66911">
    <property type="protein sequence ID" value="EAS66911"/>
    <property type="gene ID" value="DDB_G0276241"/>
</dbReference>
<dbReference type="GeneID" id="8620355"/>
<dbReference type="KEGG" id="ddi:DDB_G0276241"/>
<dbReference type="dictyBase" id="DDB_G0276241">
    <property type="gene designation" value="atp5e"/>
</dbReference>
<dbReference type="VEuPathDB" id="AmoebaDB:DDB_G0276241"/>
<dbReference type="eggNOG" id="KOG3495">
    <property type="taxonomic scope" value="Eukaryota"/>
</dbReference>
<dbReference type="HOGENOM" id="CLU_187039_2_0_1"/>
<dbReference type="InParanoid" id="Q75JK6"/>
<dbReference type="OMA" id="MAGQYWR"/>
<dbReference type="PhylomeDB" id="Q75JK6"/>
<dbReference type="PRO" id="PR:Q75JK6"/>
<dbReference type="Proteomes" id="UP000002195">
    <property type="component" value="Chromosome 2"/>
</dbReference>
<dbReference type="GO" id="GO:0005743">
    <property type="term" value="C:mitochondrial inner membrane"/>
    <property type="evidence" value="ECO:0000318"/>
    <property type="project" value="GO_Central"/>
</dbReference>
<dbReference type="GO" id="GO:0045259">
    <property type="term" value="C:proton-transporting ATP synthase complex"/>
    <property type="evidence" value="ECO:0007669"/>
    <property type="project" value="UniProtKB-KW"/>
</dbReference>
<dbReference type="GO" id="GO:0046933">
    <property type="term" value="F:proton-transporting ATP synthase activity, rotational mechanism"/>
    <property type="evidence" value="ECO:0007669"/>
    <property type="project" value="InterPro"/>
</dbReference>
<dbReference type="GO" id="GO:0042776">
    <property type="term" value="P:proton motive force-driven mitochondrial ATP synthesis"/>
    <property type="evidence" value="ECO:0000318"/>
    <property type="project" value="GO_Central"/>
</dbReference>
<dbReference type="CDD" id="cd12153">
    <property type="entry name" value="F1-ATPase_epsilon"/>
    <property type="match status" value="1"/>
</dbReference>
<dbReference type="Gene3D" id="1.10.1620.20">
    <property type="entry name" value="ATP synthase, F1 complex, epsilon subunit superfamily, mitochondrial"/>
    <property type="match status" value="1"/>
</dbReference>
<dbReference type="InterPro" id="IPR006721">
    <property type="entry name" value="ATP_synth_F1_esu_mt"/>
</dbReference>
<dbReference type="InterPro" id="IPR036742">
    <property type="entry name" value="ATP_synth_F1_esu_sf_mt"/>
</dbReference>
<dbReference type="PANTHER" id="PTHR12448">
    <property type="entry name" value="ATP SYNTHASE EPSILON CHAIN, MITOCHONDRIAL"/>
    <property type="match status" value="1"/>
</dbReference>
<dbReference type="PANTHER" id="PTHR12448:SF0">
    <property type="entry name" value="ATP SYNTHASE SUBUNIT EPSILON, MITOCHONDRIAL"/>
    <property type="match status" value="1"/>
</dbReference>
<dbReference type="Pfam" id="PF04627">
    <property type="entry name" value="ATP-synt_Eps"/>
    <property type="match status" value="1"/>
</dbReference>
<dbReference type="SUPFAM" id="SSF48690">
    <property type="entry name" value="Epsilon subunit of mitochondrial F1F0-ATP synthase"/>
    <property type="match status" value="1"/>
</dbReference>
<name>ATP5E_DICDI</name>
<sequence>MAGQYWRAAGITYLQYANICGTHVRNCLKEPFRAAAKNREGFISNTVMYQNGKESSTIILNSELLQKELLVKKN</sequence>
<evidence type="ECO:0000250" key="1">
    <source>
        <dbReference type="UniProtKB" id="P19483"/>
    </source>
</evidence>
<evidence type="ECO:0000250" key="2">
    <source>
        <dbReference type="UniProtKB" id="P56381"/>
    </source>
</evidence>
<evidence type="ECO:0000305" key="3"/>
<gene>
    <name evidence="2" type="primary">atp5f1e</name>
    <name type="synonym">atp15</name>
    <name type="synonym">atp5e</name>
    <name type="ORF">DDB_G0276241</name>
</gene>
<keyword id="KW-0066">ATP synthesis</keyword>
<keyword id="KW-0139">CF(1)</keyword>
<keyword id="KW-0375">Hydrogen ion transport</keyword>
<keyword id="KW-0406">Ion transport</keyword>
<keyword id="KW-0472">Membrane</keyword>
<keyword id="KW-0496">Mitochondrion</keyword>
<keyword id="KW-0999">Mitochondrion inner membrane</keyword>
<keyword id="KW-1185">Reference proteome</keyword>
<keyword id="KW-0813">Transport</keyword>
<feature type="chain" id="PRO_0000328318" description="ATP synthase F(1) complex subunit epsilon, mitochondrial">
    <location>
        <begin position="1"/>
        <end position="74"/>
    </location>
</feature>
<protein>
    <recommendedName>
        <fullName evidence="2">ATP synthase F(1) complex subunit epsilon, mitochondrial</fullName>
        <shortName>ATPase subunit epsilon</shortName>
    </recommendedName>
    <alternativeName>
        <fullName evidence="2">ATP synthase F1 subunit epsilon</fullName>
    </alternativeName>
</protein>